<comment type="function">
    <text evidence="3 4">Transcriptional activator that binds double-stranded DNA and the single-stranded RNA polymers poly(rA), poly(rU) and poly(rG), but not poly(rC). Mediates optimal plant architecture through brassinosteroid (BR) signaling. May act as a negative regulator in sterol homeostasis (PubMed:18953406). Acts as a negative regulator of BR signaling. Binds to the specific DNA sequence 5'-CTCGC-3' of BZR1 promoter and negatively regulates BZR1. Acts as an antagonistic transcription factor of BZR1 to attenuate the BR signaling pathway and regulate leaf bending. Represses the expression of ILI1, and activates that of IBH1 to balance the regulation activity of BZR1 (PubMed:22570626).</text>
</comment>
<comment type="subunit">
    <text evidence="4">Interacts with GSK1 and GSK4.</text>
</comment>
<comment type="subcellular location">
    <subcellularLocation>
        <location evidence="3 4">Nucleus</location>
    </subcellularLocation>
    <subcellularLocation>
        <location evidence="3 4">Cytoplasm</location>
    </subcellularLocation>
    <text evidence="4">Brassinosteroid promotes nuclear localization. Phosphorylation represses nuclear localization.</text>
</comment>
<comment type="tissue specificity">
    <text evidence="3">Expressed in the adaxial face of the collar, nodes and the basal region of elongating internodes.</text>
</comment>
<comment type="induction">
    <text evidence="3 4">Induced by 24-epibrassinolide.</text>
</comment>
<comment type="PTM">
    <text evidence="4">Phosphorylated on serine and threonine residues by GSK1. Phosphorylation represses nuclear localization.</text>
</comment>
<comment type="miscellaneous">
    <text evidence="3 4">Plants silencing LIC are short, have increased leaf and tiller angles, and display both reduced number of rachises and seeds (PubMed:18953406). Plants over-expressing LIC show erect leaves (PubMed:22570626).</text>
</comment>
<evidence type="ECO:0000255" key="1">
    <source>
        <dbReference type="PROSITE-ProRule" id="PRU00723"/>
    </source>
</evidence>
<evidence type="ECO:0000256" key="2">
    <source>
        <dbReference type="SAM" id="MobiDB-lite"/>
    </source>
</evidence>
<evidence type="ECO:0000269" key="3">
    <source>
    </source>
</evidence>
<evidence type="ECO:0000269" key="4">
    <source>
    </source>
</evidence>
<evidence type="ECO:0000303" key="5">
    <source>
    </source>
</evidence>
<evidence type="ECO:0000305" key="6"/>
<gene>
    <name evidence="5" type="primary">LIC</name>
    <name type="ordered locus">Os06g0704300</name>
    <name type="ordered locus">LOC_Os06g49080</name>
    <name type="ORF">OJ1215_E11.23</name>
</gene>
<dbReference type="EMBL" id="AP004324">
    <property type="protein sequence ID" value="BAD54049.1"/>
    <property type="molecule type" value="Genomic_DNA"/>
</dbReference>
<dbReference type="EMBL" id="AP008212">
    <property type="protein sequence ID" value="BAF20421.1"/>
    <property type="molecule type" value="Genomic_DNA"/>
</dbReference>
<dbReference type="EMBL" id="AP014962">
    <property type="protein sequence ID" value="BAS99381.1"/>
    <property type="molecule type" value="Genomic_DNA"/>
</dbReference>
<dbReference type="EMBL" id="AK107008">
    <property type="status" value="NOT_ANNOTATED_CDS"/>
    <property type="molecule type" value="mRNA"/>
</dbReference>
<dbReference type="RefSeq" id="XP_015641399.1">
    <property type="nucleotide sequence ID" value="XM_015785913.1"/>
</dbReference>
<dbReference type="SMR" id="Q5Z807"/>
<dbReference type="FunCoup" id="Q5Z807">
    <property type="interactions" value="1556"/>
</dbReference>
<dbReference type="STRING" id="39947.Q5Z807"/>
<dbReference type="PaxDb" id="39947-Q5Z807"/>
<dbReference type="EnsemblPlants" id="Os06t0704300-01">
    <property type="protein sequence ID" value="Os06t0704300-01"/>
    <property type="gene ID" value="Os06g0704300"/>
</dbReference>
<dbReference type="Gramene" id="Os06t0704300-01">
    <property type="protein sequence ID" value="Os06t0704300-01"/>
    <property type="gene ID" value="Os06g0704300"/>
</dbReference>
<dbReference type="KEGG" id="dosa:Os06g0704300"/>
<dbReference type="eggNOG" id="ENOG502QVMW">
    <property type="taxonomic scope" value="Eukaryota"/>
</dbReference>
<dbReference type="HOGENOM" id="CLU_044925_0_0_1"/>
<dbReference type="InParanoid" id="Q5Z807"/>
<dbReference type="OMA" id="FGNSGMN"/>
<dbReference type="OrthoDB" id="250836at2759"/>
<dbReference type="PlantReactome" id="R-OSA-5632095">
    <property type="pathway name" value="Brassinosteroid signaling"/>
</dbReference>
<dbReference type="Proteomes" id="UP000000763">
    <property type="component" value="Chromosome 6"/>
</dbReference>
<dbReference type="Proteomes" id="UP000059680">
    <property type="component" value="Chromosome 6"/>
</dbReference>
<dbReference type="GO" id="GO:0005737">
    <property type="term" value="C:cytoplasm"/>
    <property type="evidence" value="ECO:0000314"/>
    <property type="project" value="UniProtKB"/>
</dbReference>
<dbReference type="GO" id="GO:0005634">
    <property type="term" value="C:nucleus"/>
    <property type="evidence" value="ECO:0000314"/>
    <property type="project" value="UniProtKB"/>
</dbReference>
<dbReference type="GO" id="GO:0043565">
    <property type="term" value="F:sequence-specific DNA binding"/>
    <property type="evidence" value="ECO:0000314"/>
    <property type="project" value="UniProtKB"/>
</dbReference>
<dbReference type="GO" id="GO:0061630">
    <property type="term" value="F:ubiquitin protein ligase activity"/>
    <property type="evidence" value="ECO:0000318"/>
    <property type="project" value="GO_Central"/>
</dbReference>
<dbReference type="GO" id="GO:0008270">
    <property type="term" value="F:zinc ion binding"/>
    <property type="evidence" value="ECO:0007669"/>
    <property type="project" value="UniProtKB-KW"/>
</dbReference>
<dbReference type="GO" id="GO:0009742">
    <property type="term" value="P:brassinosteroid mediated signaling pathway"/>
    <property type="evidence" value="ECO:0007669"/>
    <property type="project" value="UniProtKB-KW"/>
</dbReference>
<dbReference type="GO" id="GO:1900458">
    <property type="term" value="P:negative regulation of brassinosteroid mediated signaling pathway"/>
    <property type="evidence" value="ECO:0000315"/>
    <property type="project" value="UniProtKB"/>
</dbReference>
<dbReference type="GO" id="GO:0016567">
    <property type="term" value="P:protein ubiquitination"/>
    <property type="evidence" value="ECO:0000318"/>
    <property type="project" value="GO_Central"/>
</dbReference>
<dbReference type="Gene3D" id="3.30.1370.210">
    <property type="match status" value="1"/>
</dbReference>
<dbReference type="InterPro" id="IPR051767">
    <property type="entry name" value="Nucleoporin_NUP42"/>
</dbReference>
<dbReference type="InterPro" id="IPR000571">
    <property type="entry name" value="Znf_CCCH"/>
</dbReference>
<dbReference type="InterPro" id="IPR036855">
    <property type="entry name" value="Znf_CCCH_sf"/>
</dbReference>
<dbReference type="PANTHER" id="PTHR46527:SF1">
    <property type="entry name" value="NUCLEOPORIN NUP42"/>
    <property type="match status" value="1"/>
</dbReference>
<dbReference type="PANTHER" id="PTHR46527">
    <property type="entry name" value="NUCLEOPORIN-LIKE PROTEIN 2"/>
    <property type="match status" value="1"/>
</dbReference>
<dbReference type="Pfam" id="PF00642">
    <property type="entry name" value="zf-CCCH"/>
    <property type="match status" value="1"/>
</dbReference>
<dbReference type="SMART" id="SM00356">
    <property type="entry name" value="ZnF_C3H1"/>
    <property type="match status" value="1"/>
</dbReference>
<dbReference type="SUPFAM" id="SSF90229">
    <property type="entry name" value="CCCH zinc finger"/>
    <property type="match status" value="1"/>
</dbReference>
<dbReference type="PROSITE" id="PS50103">
    <property type="entry name" value="ZF_C3H1"/>
    <property type="match status" value="1"/>
</dbReference>
<proteinExistence type="evidence at protein level"/>
<sequence>MSRRQEICRNFQRGSCKYGAQCRYLHASPHQQQQQQQAKPNPFGFGTGSRQQQQPSFGSQFQQQQQQQQKPNPFGFGVQGANAQSRNAPGPAKPFQNKWVRDPSAPTKQTEAVQPPQAQAAHTSCEDPQSCRQQISEDFKNEAPIWKLTCYAHLRNGPCNIKGDISFEELRAKAYEEGKQGHSLQSIVEGERNLQNAKLMEFTNLLNSARPSQTPSFPTMSSFPEVKNNSSFGASQTNGPPVFSSFSQIGAATNIGPGPGTTAPGMPASSPFGHPSSAPLAAPTFGSSQMKFGVSSVFGNQGSGQPFGSFQAPRFPSSKSPASSVQHRDIDRQSQELLNGMVTPPSVMFEESVGNNKNENQDDSIWLKEKWAIGEIPLDEPPQRHVSHVF</sequence>
<name>C3H46_ORYSJ</name>
<feature type="chain" id="PRO_0000346840" description="Zinc finger CCCH domain-containing protein 46">
    <location>
        <begin position="1"/>
        <end position="390"/>
    </location>
</feature>
<feature type="zinc finger region" description="C3H1-type" evidence="1">
    <location>
        <begin position="2"/>
        <end position="29"/>
    </location>
</feature>
<feature type="region of interest" description="Disordered" evidence="2">
    <location>
        <begin position="27"/>
        <end position="129"/>
    </location>
</feature>
<feature type="region of interest" description="Required for transcriptional activation activity" evidence="3">
    <location>
        <begin position="146"/>
        <end position="211"/>
    </location>
</feature>
<feature type="region of interest" description="Disordered" evidence="2">
    <location>
        <begin position="230"/>
        <end position="284"/>
    </location>
</feature>
<feature type="compositionally biased region" description="Low complexity" evidence="2">
    <location>
        <begin position="48"/>
        <end position="76"/>
    </location>
</feature>
<feature type="compositionally biased region" description="Polar residues" evidence="2">
    <location>
        <begin position="106"/>
        <end position="129"/>
    </location>
</feature>
<feature type="compositionally biased region" description="Polar residues" evidence="2">
    <location>
        <begin position="230"/>
        <end position="248"/>
    </location>
</feature>
<feature type="compositionally biased region" description="Low complexity" evidence="2">
    <location>
        <begin position="250"/>
        <end position="268"/>
    </location>
</feature>
<feature type="sequence conflict" description="In Ref. 4; AK107008." evidence="6" ref="4">
    <original>F</original>
    <variation>S</variation>
    <location>
        <position position="298"/>
    </location>
</feature>
<feature type="sequence conflict" description="In Ref. 4; AK107008." evidence="6" ref="4">
    <original>D</original>
    <variation>V</variation>
    <location>
        <position position="379"/>
    </location>
</feature>
<accession>Q5Z807</accession>
<accession>A0A0P0X0K1</accession>
<protein>
    <recommendedName>
        <fullName>Zinc finger CCCH domain-containing protein 46</fullName>
        <shortName>OsC3H46</shortName>
    </recommendedName>
    <alternativeName>
        <fullName evidence="5">Protein LEAF AND TILLER ANGLE INCREASED CONTROLLER</fullName>
        <shortName evidence="5">OsLIC</shortName>
    </alternativeName>
</protein>
<keyword id="KW-0010">Activator</keyword>
<keyword id="KW-1070">Brassinosteroid signaling pathway</keyword>
<keyword id="KW-0963">Cytoplasm</keyword>
<keyword id="KW-0238">DNA-binding</keyword>
<keyword id="KW-0479">Metal-binding</keyword>
<keyword id="KW-0539">Nucleus</keyword>
<keyword id="KW-1185">Reference proteome</keyword>
<keyword id="KW-0804">Transcription</keyword>
<keyword id="KW-0805">Transcription regulation</keyword>
<keyword id="KW-0862">Zinc</keyword>
<keyword id="KW-0863">Zinc-finger</keyword>
<reference key="1">
    <citation type="journal article" date="2005" name="Nature">
        <title>The map-based sequence of the rice genome.</title>
        <authorList>
            <consortium name="International rice genome sequencing project (IRGSP)"/>
        </authorList>
    </citation>
    <scope>NUCLEOTIDE SEQUENCE [LARGE SCALE GENOMIC DNA]</scope>
    <source>
        <strain>cv. Nipponbare</strain>
    </source>
</reference>
<reference key="2">
    <citation type="journal article" date="2008" name="Nucleic Acids Res.">
        <title>The rice annotation project database (RAP-DB): 2008 update.</title>
        <authorList>
            <consortium name="The rice annotation project (RAP)"/>
        </authorList>
    </citation>
    <scope>GENOME REANNOTATION</scope>
    <source>
        <strain>cv. Nipponbare</strain>
    </source>
</reference>
<reference key="3">
    <citation type="journal article" date="2013" name="Rice">
        <title>Improvement of the Oryza sativa Nipponbare reference genome using next generation sequence and optical map data.</title>
        <authorList>
            <person name="Kawahara Y."/>
            <person name="de la Bastide M."/>
            <person name="Hamilton J.P."/>
            <person name="Kanamori H."/>
            <person name="McCombie W.R."/>
            <person name="Ouyang S."/>
            <person name="Schwartz D.C."/>
            <person name="Tanaka T."/>
            <person name="Wu J."/>
            <person name="Zhou S."/>
            <person name="Childs K.L."/>
            <person name="Davidson R.M."/>
            <person name="Lin H."/>
            <person name="Quesada-Ocampo L."/>
            <person name="Vaillancourt B."/>
            <person name="Sakai H."/>
            <person name="Lee S.S."/>
            <person name="Kim J."/>
            <person name="Numa H."/>
            <person name="Itoh T."/>
            <person name="Buell C.R."/>
            <person name="Matsumoto T."/>
        </authorList>
    </citation>
    <scope>GENOME REANNOTATION</scope>
    <source>
        <strain>cv. Nipponbare</strain>
    </source>
</reference>
<reference key="4">
    <citation type="journal article" date="2003" name="Science">
        <title>Collection, mapping, and annotation of over 28,000 cDNA clones from japonica rice.</title>
        <authorList>
            <consortium name="The rice full-length cDNA consortium"/>
        </authorList>
    </citation>
    <scope>NUCLEOTIDE SEQUENCE [LARGE SCALE MRNA]</scope>
    <source>
        <strain>cv. Nipponbare</strain>
    </source>
</reference>
<reference key="5">
    <citation type="journal article" date="2008" name="BMC Genomics">
        <title>Genome-wide analysis of CCCH zinc finger family in Arabidopsis and rice.</title>
        <authorList>
            <person name="Wang D."/>
            <person name="Guo Y."/>
            <person name="Wu C."/>
            <person name="Yang G."/>
            <person name="Li Y."/>
            <person name="Zheng C."/>
        </authorList>
    </citation>
    <scope>NOMENCLATURE</scope>
</reference>
<reference key="6">
    <citation type="journal article" date="2008" name="PLoS ONE">
        <title>OsLIC, a novel CCCH-Type zinc finger protein with transcription activation, mediates rice architecture via brassinosteroids signaling.</title>
        <authorList>
            <person name="Wang L."/>
            <person name="Xu Y."/>
            <person name="Zhang C."/>
            <person name="Ma Q."/>
            <person name="Joo S.H."/>
            <person name="Kim S.K."/>
            <person name="Xu Z."/>
            <person name="Chong K."/>
        </authorList>
    </citation>
    <scope>FUNCTION</scope>
    <scope>SUBCELLULAR LOCATION</scope>
    <scope>TISSUE SPECIFICITY</scope>
    <scope>INDUCTION BY 24-EPIBRASSINOLIDE</scope>
</reference>
<reference key="7">
    <citation type="journal article" date="2012" name="PLoS Genet.">
        <title>Dynamics of brassinosteroid response modulated by negative regulator LIC in rice.</title>
        <authorList>
            <person name="Zhang C."/>
            <person name="Xu Y."/>
            <person name="Guo S."/>
            <person name="Zhu J."/>
            <person name="Huan Q."/>
            <person name="Liu H."/>
            <person name="Wang L."/>
            <person name="Luo G."/>
            <person name="Wang X."/>
            <person name="Chong K."/>
        </authorList>
    </citation>
    <scope>FUNCTION</scope>
    <scope>INTERACTION WITH GSK1 AND GSK4</scope>
    <scope>SUBCELLULAR LOCATION</scope>
    <scope>INDUCTION BY 24-EPIBRASSINOLIDE</scope>
    <scope>PHOSPHORYLATION</scope>
</reference>
<organism>
    <name type="scientific">Oryza sativa subsp. japonica</name>
    <name type="common">Rice</name>
    <dbReference type="NCBI Taxonomy" id="39947"/>
    <lineage>
        <taxon>Eukaryota</taxon>
        <taxon>Viridiplantae</taxon>
        <taxon>Streptophyta</taxon>
        <taxon>Embryophyta</taxon>
        <taxon>Tracheophyta</taxon>
        <taxon>Spermatophyta</taxon>
        <taxon>Magnoliopsida</taxon>
        <taxon>Liliopsida</taxon>
        <taxon>Poales</taxon>
        <taxon>Poaceae</taxon>
        <taxon>BOP clade</taxon>
        <taxon>Oryzoideae</taxon>
        <taxon>Oryzeae</taxon>
        <taxon>Oryzinae</taxon>
        <taxon>Oryza</taxon>
        <taxon>Oryza sativa</taxon>
    </lineage>
</organism>